<reference key="1">
    <citation type="journal article" date="2004" name="Nat. Biotechnol.">
        <title>Complete genome sequence of the metabolically versatile photosynthetic bacterium Rhodopseudomonas palustris.</title>
        <authorList>
            <person name="Larimer F.W."/>
            <person name="Chain P."/>
            <person name="Hauser L."/>
            <person name="Lamerdin J.E."/>
            <person name="Malfatti S."/>
            <person name="Do L."/>
            <person name="Land M.L."/>
            <person name="Pelletier D.A."/>
            <person name="Beatty J.T."/>
            <person name="Lang A.S."/>
            <person name="Tabita F.R."/>
            <person name="Gibson J.L."/>
            <person name="Hanson T.E."/>
            <person name="Bobst C."/>
            <person name="Torres y Torres J.L."/>
            <person name="Peres C."/>
            <person name="Harrison F.H."/>
            <person name="Gibson J."/>
            <person name="Harwood C.S."/>
        </authorList>
    </citation>
    <scope>NUCLEOTIDE SEQUENCE [LARGE SCALE GENOMIC DNA]</scope>
    <source>
        <strain>ATCC BAA-98 / CGA009</strain>
    </source>
</reference>
<reference key="2">
    <citation type="journal article" date="2004" name="J. Proteome Res.">
        <title>Characterization of the 70S ribosome from Rhodopseudomonas palustris using an integrated 'top-down' and 'bottom-up' mass spectrometric approach.</title>
        <authorList>
            <person name="Strader M.B."/>
            <person name="VerBerkmoes N.C."/>
            <person name="Tabb D.L."/>
            <person name="Connelly H.M."/>
            <person name="Barton J.W."/>
            <person name="Bruce B.D."/>
            <person name="Pelletier D.A."/>
            <person name="Davison B.H."/>
            <person name="Hettich R.L."/>
            <person name="Larimer F.W."/>
            <person name="Hurst G.B."/>
        </authorList>
    </citation>
    <scope>MASS SPECTROMETRY</scope>
    <source>
        <strain>ATCC BAA-98 / CGA009</strain>
    </source>
</reference>
<protein>
    <recommendedName>
        <fullName evidence="2">Large ribosomal subunit protein bL21</fullName>
    </recommendedName>
    <alternativeName>
        <fullName evidence="5">50S ribosomal protein L21</fullName>
    </alternativeName>
    <alternativeName>
        <fullName>RRP-L21</fullName>
    </alternativeName>
</protein>
<proteinExistence type="evidence at protein level"/>
<dbReference type="EMBL" id="BX572593">
    <property type="protein sequence ID" value="CAE25602.1"/>
    <property type="molecule type" value="Genomic_DNA"/>
</dbReference>
<dbReference type="RefSeq" id="WP_011155726.1">
    <property type="nucleotide sequence ID" value="NZ_CP116810.1"/>
</dbReference>
<dbReference type="SMR" id="Q6NDF0"/>
<dbReference type="IntAct" id="Q6NDF0">
    <property type="interactions" value="1"/>
</dbReference>
<dbReference type="STRING" id="258594.RPA0158"/>
<dbReference type="GeneID" id="66891161"/>
<dbReference type="eggNOG" id="COG0261">
    <property type="taxonomic scope" value="Bacteria"/>
</dbReference>
<dbReference type="HOGENOM" id="CLU_061463_1_2_5"/>
<dbReference type="PhylomeDB" id="Q6NDF0"/>
<dbReference type="GO" id="GO:0005737">
    <property type="term" value="C:cytoplasm"/>
    <property type="evidence" value="ECO:0007669"/>
    <property type="project" value="UniProtKB-ARBA"/>
</dbReference>
<dbReference type="GO" id="GO:1990904">
    <property type="term" value="C:ribonucleoprotein complex"/>
    <property type="evidence" value="ECO:0007669"/>
    <property type="project" value="UniProtKB-KW"/>
</dbReference>
<dbReference type="GO" id="GO:0005840">
    <property type="term" value="C:ribosome"/>
    <property type="evidence" value="ECO:0007669"/>
    <property type="project" value="UniProtKB-KW"/>
</dbReference>
<dbReference type="GO" id="GO:0019843">
    <property type="term" value="F:rRNA binding"/>
    <property type="evidence" value="ECO:0007669"/>
    <property type="project" value="UniProtKB-UniRule"/>
</dbReference>
<dbReference type="GO" id="GO:0003735">
    <property type="term" value="F:structural constituent of ribosome"/>
    <property type="evidence" value="ECO:0007669"/>
    <property type="project" value="InterPro"/>
</dbReference>
<dbReference type="GO" id="GO:0006412">
    <property type="term" value="P:translation"/>
    <property type="evidence" value="ECO:0007669"/>
    <property type="project" value="UniProtKB-UniRule"/>
</dbReference>
<dbReference type="HAMAP" id="MF_01363">
    <property type="entry name" value="Ribosomal_bL21"/>
    <property type="match status" value="1"/>
</dbReference>
<dbReference type="InterPro" id="IPR028909">
    <property type="entry name" value="bL21-like"/>
</dbReference>
<dbReference type="InterPro" id="IPR036164">
    <property type="entry name" value="bL21-like_sf"/>
</dbReference>
<dbReference type="InterPro" id="IPR001787">
    <property type="entry name" value="Ribosomal_bL21"/>
</dbReference>
<dbReference type="NCBIfam" id="TIGR00061">
    <property type="entry name" value="L21"/>
    <property type="match status" value="1"/>
</dbReference>
<dbReference type="PANTHER" id="PTHR21349">
    <property type="entry name" value="50S RIBOSOMAL PROTEIN L21"/>
    <property type="match status" value="1"/>
</dbReference>
<dbReference type="PANTHER" id="PTHR21349:SF0">
    <property type="entry name" value="LARGE RIBOSOMAL SUBUNIT PROTEIN BL21M"/>
    <property type="match status" value="1"/>
</dbReference>
<dbReference type="Pfam" id="PF00829">
    <property type="entry name" value="Ribosomal_L21p"/>
    <property type="match status" value="1"/>
</dbReference>
<dbReference type="SUPFAM" id="SSF141091">
    <property type="entry name" value="L21p-like"/>
    <property type="match status" value="1"/>
</dbReference>
<gene>
    <name evidence="2" type="primary">rplU</name>
    <name type="ordered locus">RPA0158</name>
</gene>
<keyword id="KW-0687">Ribonucleoprotein</keyword>
<keyword id="KW-0689">Ribosomal protein</keyword>
<keyword id="KW-0694">RNA-binding</keyword>
<keyword id="KW-0699">rRNA-binding</keyword>
<comment type="function">
    <text evidence="2">This protein binds to 23S rRNA in the presence of protein L20.</text>
</comment>
<comment type="subunit">
    <text evidence="1">Contacts protein L20 (By similarity). Part of the 50S ribosomal subunit.</text>
</comment>
<comment type="mass spectrometry"/>
<comment type="similarity">
    <text evidence="2">Belongs to the bacterial ribosomal protein bL21 family.</text>
</comment>
<organism>
    <name type="scientific">Rhodopseudomonas palustris (strain ATCC BAA-98 / CGA009)</name>
    <dbReference type="NCBI Taxonomy" id="258594"/>
    <lineage>
        <taxon>Bacteria</taxon>
        <taxon>Pseudomonadati</taxon>
        <taxon>Pseudomonadota</taxon>
        <taxon>Alphaproteobacteria</taxon>
        <taxon>Hyphomicrobiales</taxon>
        <taxon>Nitrobacteraceae</taxon>
        <taxon>Rhodopseudomonas</taxon>
    </lineage>
</organism>
<evidence type="ECO:0000250" key="1"/>
<evidence type="ECO:0000255" key="2">
    <source>
        <dbReference type="HAMAP-Rule" id="MF_01363"/>
    </source>
</evidence>
<evidence type="ECO:0000256" key="3">
    <source>
        <dbReference type="SAM" id="MobiDB-lite"/>
    </source>
</evidence>
<evidence type="ECO:0000269" key="4">
    <source>
    </source>
</evidence>
<evidence type="ECO:0000305" key="5"/>
<feature type="initiator methionine" description="Removed">
    <location>
        <position position="1"/>
    </location>
</feature>
<feature type="chain" id="PRO_0000224159" description="Large ribosomal subunit protein bL21">
    <location>
        <begin position="2"/>
        <end position="126"/>
    </location>
</feature>
<feature type="region of interest" description="Disordered" evidence="3">
    <location>
        <begin position="105"/>
        <end position="126"/>
    </location>
</feature>
<accession>Q6NDF0</accession>
<name>RL21_RHOPA</name>
<sequence>MFAVIKTGGRQYRVVPEDVLEVGKIDGDVGSIIQLGEVLVLGGDTPVLGAPTVAGATVAAEVLDHKRGPKVIAFKKRRRKHSKRKRGYRDEITVLRITEILADGKKPSVGPRAKRTKAAPAAEAAE</sequence>